<dbReference type="EC" id="2.4.1.-"/>
<dbReference type="EMBL" id="AC011001">
    <property type="protein sequence ID" value="AAF63140.1"/>
    <property type="molecule type" value="Genomic_DNA"/>
</dbReference>
<dbReference type="EMBL" id="CP002684">
    <property type="protein sequence ID" value="AEE28035.1"/>
    <property type="molecule type" value="Genomic_DNA"/>
</dbReference>
<dbReference type="EMBL" id="AY045900">
    <property type="protein sequence ID" value="AAK76574.1"/>
    <property type="molecule type" value="mRNA"/>
</dbReference>
<dbReference type="EMBL" id="AY091452">
    <property type="protein sequence ID" value="AAM14391.1"/>
    <property type="molecule type" value="mRNA"/>
</dbReference>
<dbReference type="PIR" id="F86202">
    <property type="entry name" value="F86202"/>
</dbReference>
<dbReference type="RefSeq" id="NP_563771.1">
    <molecule id="Q9M9Y5-1"/>
    <property type="nucleotide sequence ID" value="NM_100555.3"/>
</dbReference>
<dbReference type="SMR" id="Q9M9Y5"/>
<dbReference type="FunCoup" id="Q9M9Y5">
    <property type="interactions" value="623"/>
</dbReference>
<dbReference type="STRING" id="3702.Q9M9Y5"/>
<dbReference type="CAZy" id="GT8">
    <property type="family name" value="Glycosyltransferase Family 8"/>
</dbReference>
<dbReference type="GlyCosmos" id="Q9M9Y5">
    <property type="glycosylation" value="4 sites, No reported glycans"/>
</dbReference>
<dbReference type="GlyGen" id="Q9M9Y5">
    <property type="glycosylation" value="4 sites"/>
</dbReference>
<dbReference type="PaxDb" id="3702-AT1G06780.2"/>
<dbReference type="ProteomicsDB" id="224291">
    <molecule id="Q9M9Y5-1"/>
</dbReference>
<dbReference type="EnsemblPlants" id="AT1G06780.1">
    <molecule id="Q9M9Y5-1"/>
    <property type="protein sequence ID" value="AT1G06780.1"/>
    <property type="gene ID" value="AT1G06780"/>
</dbReference>
<dbReference type="GeneID" id="837189"/>
<dbReference type="Gramene" id="AT1G06780.1">
    <molecule id="Q9M9Y5-1"/>
    <property type="protein sequence ID" value="AT1G06780.1"/>
    <property type="gene ID" value="AT1G06780"/>
</dbReference>
<dbReference type="KEGG" id="ath:AT1G06780"/>
<dbReference type="Araport" id="AT1G06780"/>
<dbReference type="TAIR" id="AT1G06780">
    <property type="gene designation" value="GAUT6"/>
</dbReference>
<dbReference type="eggNOG" id="ENOG502QT8Z">
    <property type="taxonomic scope" value="Eukaryota"/>
</dbReference>
<dbReference type="HOGENOM" id="CLU_010770_2_1_1"/>
<dbReference type="InParanoid" id="Q9M9Y5"/>
<dbReference type="OMA" id="DSENNHD"/>
<dbReference type="PhylomeDB" id="Q9M9Y5"/>
<dbReference type="UniPathway" id="UPA00845"/>
<dbReference type="PRO" id="PR:Q9M9Y5"/>
<dbReference type="Proteomes" id="UP000006548">
    <property type="component" value="Chromosome 1"/>
</dbReference>
<dbReference type="ExpressionAtlas" id="Q9M9Y5">
    <property type="expression patterns" value="baseline and differential"/>
</dbReference>
<dbReference type="GO" id="GO:0000139">
    <property type="term" value="C:Golgi membrane"/>
    <property type="evidence" value="ECO:0007669"/>
    <property type="project" value="UniProtKB-SubCell"/>
</dbReference>
<dbReference type="GO" id="GO:0047262">
    <property type="term" value="F:polygalacturonate 4-alpha-galacturonosyltransferase activity"/>
    <property type="evidence" value="ECO:0007669"/>
    <property type="project" value="InterPro"/>
</dbReference>
<dbReference type="GO" id="GO:0071555">
    <property type="term" value="P:cell wall organization"/>
    <property type="evidence" value="ECO:0007669"/>
    <property type="project" value="UniProtKB-KW"/>
</dbReference>
<dbReference type="GO" id="GO:0045489">
    <property type="term" value="P:pectin biosynthetic process"/>
    <property type="evidence" value="ECO:0007669"/>
    <property type="project" value="UniProtKB-UniPathway"/>
</dbReference>
<dbReference type="CDD" id="cd06429">
    <property type="entry name" value="GT8_like_1"/>
    <property type="match status" value="1"/>
</dbReference>
<dbReference type="FunFam" id="3.90.550.10:FF:000056">
    <property type="entry name" value="Hexosyltransferase"/>
    <property type="match status" value="1"/>
</dbReference>
<dbReference type="Gene3D" id="3.90.550.10">
    <property type="entry name" value="Spore Coat Polysaccharide Biosynthesis Protein SpsA, Chain A"/>
    <property type="match status" value="1"/>
</dbReference>
<dbReference type="InterPro" id="IPR029993">
    <property type="entry name" value="GAUT"/>
</dbReference>
<dbReference type="InterPro" id="IPR002495">
    <property type="entry name" value="Glyco_trans_8"/>
</dbReference>
<dbReference type="InterPro" id="IPR029044">
    <property type="entry name" value="Nucleotide-diphossugar_trans"/>
</dbReference>
<dbReference type="PANTHER" id="PTHR32116">
    <property type="entry name" value="GALACTURONOSYLTRANSFERASE 4-RELATED"/>
    <property type="match status" value="1"/>
</dbReference>
<dbReference type="PANTHER" id="PTHR32116:SF0">
    <property type="entry name" value="GALACTURONOSYLTRANSFERASE 6-RELATED"/>
    <property type="match status" value="1"/>
</dbReference>
<dbReference type="Pfam" id="PF01501">
    <property type="entry name" value="Glyco_transf_8"/>
    <property type="match status" value="1"/>
</dbReference>
<dbReference type="SUPFAM" id="SSF53448">
    <property type="entry name" value="Nucleotide-diphospho-sugar transferases"/>
    <property type="match status" value="1"/>
</dbReference>
<reference key="1">
    <citation type="journal article" date="2000" name="Nature">
        <title>Sequence and analysis of chromosome 1 of the plant Arabidopsis thaliana.</title>
        <authorList>
            <person name="Theologis A."/>
            <person name="Ecker J.R."/>
            <person name="Palm C.J."/>
            <person name="Federspiel N.A."/>
            <person name="Kaul S."/>
            <person name="White O."/>
            <person name="Alonso J."/>
            <person name="Altafi H."/>
            <person name="Araujo R."/>
            <person name="Bowman C.L."/>
            <person name="Brooks S.Y."/>
            <person name="Buehler E."/>
            <person name="Chan A."/>
            <person name="Chao Q."/>
            <person name="Chen H."/>
            <person name="Cheuk R.F."/>
            <person name="Chin C.W."/>
            <person name="Chung M.K."/>
            <person name="Conn L."/>
            <person name="Conway A.B."/>
            <person name="Conway A.R."/>
            <person name="Creasy T.H."/>
            <person name="Dewar K."/>
            <person name="Dunn P."/>
            <person name="Etgu P."/>
            <person name="Feldblyum T.V."/>
            <person name="Feng J.-D."/>
            <person name="Fong B."/>
            <person name="Fujii C.Y."/>
            <person name="Gill J.E."/>
            <person name="Goldsmith A.D."/>
            <person name="Haas B."/>
            <person name="Hansen N.F."/>
            <person name="Hughes B."/>
            <person name="Huizar L."/>
            <person name="Hunter J.L."/>
            <person name="Jenkins J."/>
            <person name="Johnson-Hopson C."/>
            <person name="Khan S."/>
            <person name="Khaykin E."/>
            <person name="Kim C.J."/>
            <person name="Koo H.L."/>
            <person name="Kremenetskaia I."/>
            <person name="Kurtz D.B."/>
            <person name="Kwan A."/>
            <person name="Lam B."/>
            <person name="Langin-Hooper S."/>
            <person name="Lee A."/>
            <person name="Lee J.M."/>
            <person name="Lenz C.A."/>
            <person name="Li J.H."/>
            <person name="Li Y.-P."/>
            <person name="Lin X."/>
            <person name="Liu S.X."/>
            <person name="Liu Z.A."/>
            <person name="Luros J.S."/>
            <person name="Maiti R."/>
            <person name="Marziali A."/>
            <person name="Militscher J."/>
            <person name="Miranda M."/>
            <person name="Nguyen M."/>
            <person name="Nierman W.C."/>
            <person name="Osborne B.I."/>
            <person name="Pai G."/>
            <person name="Peterson J."/>
            <person name="Pham P.K."/>
            <person name="Rizzo M."/>
            <person name="Rooney T."/>
            <person name="Rowley D."/>
            <person name="Sakano H."/>
            <person name="Salzberg S.L."/>
            <person name="Schwartz J.R."/>
            <person name="Shinn P."/>
            <person name="Southwick A.M."/>
            <person name="Sun H."/>
            <person name="Tallon L.J."/>
            <person name="Tambunga G."/>
            <person name="Toriumi M.J."/>
            <person name="Town C.D."/>
            <person name="Utterback T."/>
            <person name="Van Aken S."/>
            <person name="Vaysberg M."/>
            <person name="Vysotskaia V.S."/>
            <person name="Walker M."/>
            <person name="Wu D."/>
            <person name="Yu G."/>
            <person name="Fraser C.M."/>
            <person name="Venter J.C."/>
            <person name="Davis R.W."/>
        </authorList>
    </citation>
    <scope>NUCLEOTIDE SEQUENCE [LARGE SCALE GENOMIC DNA]</scope>
    <source>
        <strain>cv. Columbia</strain>
    </source>
</reference>
<reference key="2">
    <citation type="journal article" date="2017" name="Plant J.">
        <title>Araport11: a complete reannotation of the Arabidopsis thaliana reference genome.</title>
        <authorList>
            <person name="Cheng C.Y."/>
            <person name="Krishnakumar V."/>
            <person name="Chan A.P."/>
            <person name="Thibaud-Nissen F."/>
            <person name="Schobel S."/>
            <person name="Town C.D."/>
        </authorList>
    </citation>
    <scope>GENOME REANNOTATION</scope>
    <source>
        <strain>cv. Columbia</strain>
    </source>
</reference>
<reference key="3">
    <citation type="journal article" date="2003" name="Science">
        <title>Empirical analysis of transcriptional activity in the Arabidopsis genome.</title>
        <authorList>
            <person name="Yamada K."/>
            <person name="Lim J."/>
            <person name="Dale J.M."/>
            <person name="Chen H."/>
            <person name="Shinn P."/>
            <person name="Palm C.J."/>
            <person name="Southwick A.M."/>
            <person name="Wu H.C."/>
            <person name="Kim C.J."/>
            <person name="Nguyen M."/>
            <person name="Pham P.K."/>
            <person name="Cheuk R.F."/>
            <person name="Karlin-Newmann G."/>
            <person name="Liu S.X."/>
            <person name="Lam B."/>
            <person name="Sakano H."/>
            <person name="Wu T."/>
            <person name="Yu G."/>
            <person name="Miranda M."/>
            <person name="Quach H.L."/>
            <person name="Tripp M."/>
            <person name="Chang C.H."/>
            <person name="Lee J.M."/>
            <person name="Toriumi M.J."/>
            <person name="Chan M.M."/>
            <person name="Tang C.C."/>
            <person name="Onodera C.S."/>
            <person name="Deng J.M."/>
            <person name="Akiyama K."/>
            <person name="Ansari Y."/>
            <person name="Arakawa T."/>
            <person name="Banh J."/>
            <person name="Banno F."/>
            <person name="Bowser L."/>
            <person name="Brooks S.Y."/>
            <person name="Carninci P."/>
            <person name="Chao Q."/>
            <person name="Choy N."/>
            <person name="Enju A."/>
            <person name="Goldsmith A.D."/>
            <person name="Gurjal M."/>
            <person name="Hansen N.F."/>
            <person name="Hayashizaki Y."/>
            <person name="Johnson-Hopson C."/>
            <person name="Hsuan V.W."/>
            <person name="Iida K."/>
            <person name="Karnes M."/>
            <person name="Khan S."/>
            <person name="Koesema E."/>
            <person name="Ishida J."/>
            <person name="Jiang P.X."/>
            <person name="Jones T."/>
            <person name="Kawai J."/>
            <person name="Kamiya A."/>
            <person name="Meyers C."/>
            <person name="Nakajima M."/>
            <person name="Narusaka M."/>
            <person name="Seki M."/>
            <person name="Sakurai T."/>
            <person name="Satou M."/>
            <person name="Tamse R."/>
            <person name="Vaysberg M."/>
            <person name="Wallender E.K."/>
            <person name="Wong C."/>
            <person name="Yamamura Y."/>
            <person name="Yuan S."/>
            <person name="Shinozaki K."/>
            <person name="Davis R.W."/>
            <person name="Theologis A."/>
            <person name="Ecker J.R."/>
        </authorList>
    </citation>
    <scope>NUCLEOTIDE SEQUENCE [LARGE SCALE MRNA]</scope>
    <source>
        <strain>cv. Columbia</strain>
    </source>
</reference>
<reference key="4">
    <citation type="journal article" date="2006" name="Proc. Natl. Acad. Sci. U.S.A.">
        <title>Functional identification of an Arabidopsis pectin biosynthetic homogalacturonan galacturonosyltransferase.</title>
        <authorList>
            <person name="Sterling J.D."/>
            <person name="Atmodjo M.A."/>
            <person name="Inwood S.E."/>
            <person name="Kumar Kolli V.S."/>
            <person name="Quigley H.F."/>
            <person name="Hahn M.G."/>
            <person name="Mohnen D."/>
        </authorList>
    </citation>
    <scope>GENE FAMILY</scope>
    <scope>NOMENCLATURE</scope>
</reference>
<reference key="5">
    <citation type="journal article" date="2009" name="Mol. Plant">
        <title>Arabidopsis thaliana T-DNA mutants implicate GAUT genes in the biosynthesis of pectin and xylan in cell walls and seed testa.</title>
        <authorList>
            <person name="Caffall K.H."/>
            <person name="Pattathil S."/>
            <person name="Phillips S.E."/>
            <person name="Hahn M.G."/>
            <person name="Mohnen D."/>
        </authorList>
    </citation>
    <scope>FUNCTION</scope>
    <scope>TISSUE SPECIFICITY</scope>
    <scope>DISRUPTION PHENOTYPE</scope>
</reference>
<organism>
    <name type="scientific">Arabidopsis thaliana</name>
    <name type="common">Mouse-ear cress</name>
    <dbReference type="NCBI Taxonomy" id="3702"/>
    <lineage>
        <taxon>Eukaryota</taxon>
        <taxon>Viridiplantae</taxon>
        <taxon>Streptophyta</taxon>
        <taxon>Embryophyta</taxon>
        <taxon>Tracheophyta</taxon>
        <taxon>Spermatophyta</taxon>
        <taxon>Magnoliopsida</taxon>
        <taxon>eudicotyledons</taxon>
        <taxon>Gunneridae</taxon>
        <taxon>Pentapetalae</taxon>
        <taxon>rosids</taxon>
        <taxon>malvids</taxon>
        <taxon>Brassicales</taxon>
        <taxon>Brassicaceae</taxon>
        <taxon>Camelineae</taxon>
        <taxon>Arabidopsis</taxon>
    </lineage>
</organism>
<comment type="function">
    <text evidence="3">Probably involved in pectin biosynthesis in cell walls.</text>
</comment>
<comment type="pathway">
    <text>Glycan metabolism; pectin biosynthesis.</text>
</comment>
<comment type="subcellular location">
    <subcellularLocation>
        <location>Golgi apparatus membrane</location>
        <topology>Single-pass type II membrane protein</topology>
    </subcellularLocation>
</comment>
<comment type="alternative products">
    <event type="alternative splicing"/>
    <isoform>
        <id>Q9M9Y5-1</id>
        <name>1</name>
        <sequence type="displayed"/>
    </isoform>
    <text>A number of isoforms are produced. According to EST sequences.</text>
</comment>
<comment type="tissue specificity">
    <text evidence="3">Expressed in roots, inflorescences, siliques, leaves and stems.</text>
</comment>
<comment type="disruption phenotype">
    <text evidence="3">Reduced galacturonic acid content in cell wall.</text>
</comment>
<comment type="similarity">
    <text evidence="4">Belongs to the glycosyltransferase 8 family.</text>
</comment>
<gene>
    <name type="primary">GAUT6</name>
    <name type="ordered locus">At1g06780</name>
    <name type="ORF">F4H5.13</name>
</gene>
<feature type="chain" id="PRO_0000392559" description="Probable galacturonosyltransferase 6">
    <location>
        <begin position="1"/>
        <end position="589"/>
    </location>
</feature>
<feature type="topological domain" description="Cytoplasmic" evidence="1">
    <location>
        <begin position="1"/>
        <end position="6"/>
    </location>
</feature>
<feature type="transmembrane region" description="Helical; Signal-anchor for type II membrane protein" evidence="1">
    <location>
        <begin position="7"/>
        <end position="27"/>
    </location>
</feature>
<feature type="topological domain" description="Lumenal" evidence="1">
    <location>
        <begin position="28"/>
        <end position="589"/>
    </location>
</feature>
<feature type="region of interest" description="Disordered" evidence="2">
    <location>
        <begin position="127"/>
        <end position="151"/>
    </location>
</feature>
<feature type="compositionally biased region" description="Basic and acidic residues" evidence="2">
    <location>
        <begin position="136"/>
        <end position="151"/>
    </location>
</feature>
<feature type="glycosylation site" description="N-linked (GlcNAc...) asparagine" evidence="1">
    <location>
        <position position="83"/>
    </location>
</feature>
<feature type="glycosylation site" description="N-linked (GlcNAc...) asparagine" evidence="1">
    <location>
        <position position="126"/>
    </location>
</feature>
<feature type="glycosylation site" description="N-linked (GlcNAc...) asparagine" evidence="1">
    <location>
        <position position="317"/>
    </location>
</feature>
<feature type="glycosylation site" description="N-linked (GlcNAc...) asparagine" evidence="1">
    <location>
        <position position="454"/>
    </location>
</feature>
<sequence>MKQIRRWQRILILALLSISVFAPLIFVSNRLKSITPVGRREFIEELSKIRFTTNDLRLSAIEHEDGEGLKGPRLILFKDGEFNSSAESDGGNTYKNREEQVIVSQKMTVSSDEKGQILPTVNQLANKTDFKPPLSKGEKNTRVQPDRATDVKTKEIRDKIIQAKAYLNFAPPGSNSQVVKELRGRLKELERSVGDATKDKDLSKGALRRVKPMENVLYKASRVFNNCPAIATKLRAMNYNTEEQVQAQKNQAAYLMQLAARTTPKGLHCLSMRLTSEYFSLDPEKRQMPNQQNYFDANFNHYVVFSDNVLASSVVVNSTISSSKEPERIVFHVVTDSLNYPAISMWFLLNIQSKATIQILNIDDMDVLPRDYDQLLMKQNSNDPRFISTLNHARFYLPDIFPGLNKMVLLDHDVVVQRDLSRLWSIDMKGKVVGAVETCLEGESSFRSMSTFINFSDTWVAGKFSPRACTWAFGMNLIDLEEWRIRKLTSTYIKYFNLGTKRPLWKAGSLPIGWLTFYRQTLALDKRWHVMGLGRESGVKAVDIEQAAVIHYDGVMKPWLDIGKENYKRYWNIHVPYHHTYLQQCNLQA</sequence>
<keyword id="KW-0025">Alternative splicing</keyword>
<keyword id="KW-0961">Cell wall biogenesis/degradation</keyword>
<keyword id="KW-0325">Glycoprotein</keyword>
<keyword id="KW-0328">Glycosyltransferase</keyword>
<keyword id="KW-0333">Golgi apparatus</keyword>
<keyword id="KW-0472">Membrane</keyword>
<keyword id="KW-1185">Reference proteome</keyword>
<keyword id="KW-0735">Signal-anchor</keyword>
<keyword id="KW-0808">Transferase</keyword>
<keyword id="KW-0812">Transmembrane</keyword>
<keyword id="KW-1133">Transmembrane helix</keyword>
<protein>
    <recommendedName>
        <fullName>Probable galacturonosyltransferase 6</fullName>
        <ecNumber>2.4.1.-</ecNumber>
    </recommendedName>
</protein>
<accession>Q9M9Y5</accession>
<proteinExistence type="evidence at transcript level"/>
<name>GAUT6_ARATH</name>
<evidence type="ECO:0000255" key="1"/>
<evidence type="ECO:0000256" key="2">
    <source>
        <dbReference type="SAM" id="MobiDB-lite"/>
    </source>
</evidence>
<evidence type="ECO:0000269" key="3">
    <source>
    </source>
</evidence>
<evidence type="ECO:0000305" key="4"/>